<comment type="function">
    <text evidence="3">May be a sugar porin with a broad carbohydrate specificity.</text>
</comment>
<comment type="subcellular location">
    <subcellularLocation>
        <location evidence="3">Cell outer membrane</location>
        <topology evidence="3">Multi-pass membrane protein</topology>
    </subcellularLocation>
</comment>
<comment type="similarity">
    <text evidence="3">Belongs to the porin LamB (TC 1.B.3) family.</text>
</comment>
<organism>
    <name type="scientific">Shigella sonnei (strain Ss046)</name>
    <dbReference type="NCBI Taxonomy" id="300269"/>
    <lineage>
        <taxon>Bacteria</taxon>
        <taxon>Pseudomonadati</taxon>
        <taxon>Pseudomonadota</taxon>
        <taxon>Gammaproteobacteria</taxon>
        <taxon>Enterobacterales</taxon>
        <taxon>Enterobacteriaceae</taxon>
        <taxon>Shigella</taxon>
    </lineage>
</organism>
<proteinExistence type="inferred from homology"/>
<accession>Q3YVL2</accession>
<reference key="1">
    <citation type="journal article" date="2005" name="Nucleic Acids Res.">
        <title>Genome dynamics and diversity of Shigella species, the etiologic agents of bacillary dysentery.</title>
        <authorList>
            <person name="Yang F."/>
            <person name="Yang J."/>
            <person name="Zhang X."/>
            <person name="Chen L."/>
            <person name="Jiang Y."/>
            <person name="Yan Y."/>
            <person name="Tang X."/>
            <person name="Wang J."/>
            <person name="Xiong Z."/>
            <person name="Dong J."/>
            <person name="Xue Y."/>
            <person name="Zhu Y."/>
            <person name="Xu X."/>
            <person name="Sun L."/>
            <person name="Chen S."/>
            <person name="Nie H."/>
            <person name="Peng J."/>
            <person name="Xu J."/>
            <person name="Wang Y."/>
            <person name="Yuan Z."/>
            <person name="Wen Y."/>
            <person name="Yao Z."/>
            <person name="Shen Y."/>
            <person name="Qiang B."/>
            <person name="Hou Y."/>
            <person name="Yu J."/>
            <person name="Jin Q."/>
        </authorList>
    </citation>
    <scope>NUCLEOTIDE SEQUENCE [LARGE SCALE GENOMIC DNA]</scope>
    <source>
        <strain>Ss046</strain>
    </source>
</reference>
<name>BGLH_SHISS</name>
<protein>
    <recommendedName>
        <fullName>Putative outer membrane porin BglH</fullName>
    </recommendedName>
</protein>
<feature type="signal peptide" evidence="1">
    <location>
        <begin position="1"/>
        <end position="25"/>
    </location>
</feature>
<feature type="chain" id="PRO_0000355027" description="Putative outer membrane porin BglH">
    <location>
        <begin position="26"/>
        <end position="538"/>
    </location>
</feature>
<feature type="region of interest" description="Disordered" evidence="2">
    <location>
        <begin position="52"/>
        <end position="82"/>
    </location>
</feature>
<feature type="compositionally biased region" description="Polar residues" evidence="2">
    <location>
        <begin position="62"/>
        <end position="73"/>
    </location>
</feature>
<dbReference type="EMBL" id="CP000038">
    <property type="protein sequence ID" value="AAZ90450.1"/>
    <property type="molecule type" value="Genomic_DNA"/>
</dbReference>
<dbReference type="RefSeq" id="WP_000489871.1">
    <property type="nucleotide sequence ID" value="NC_007384.1"/>
</dbReference>
<dbReference type="SMR" id="Q3YVL2"/>
<dbReference type="GeneID" id="93778205"/>
<dbReference type="KEGG" id="ssn:SSON_3915"/>
<dbReference type="HOGENOM" id="CLU_032473_2_1_6"/>
<dbReference type="Proteomes" id="UP000002529">
    <property type="component" value="Chromosome"/>
</dbReference>
<dbReference type="GO" id="GO:0009279">
    <property type="term" value="C:cell outer membrane"/>
    <property type="evidence" value="ECO:0007669"/>
    <property type="project" value="UniProtKB-SubCell"/>
</dbReference>
<dbReference type="GO" id="GO:0046930">
    <property type="term" value="C:pore complex"/>
    <property type="evidence" value="ECO:0007669"/>
    <property type="project" value="UniProtKB-KW"/>
</dbReference>
<dbReference type="GO" id="GO:0015144">
    <property type="term" value="F:carbohydrate transmembrane transporter activity"/>
    <property type="evidence" value="ECO:0007669"/>
    <property type="project" value="TreeGrafter"/>
</dbReference>
<dbReference type="GO" id="GO:0015288">
    <property type="term" value="F:porin activity"/>
    <property type="evidence" value="ECO:0007669"/>
    <property type="project" value="UniProtKB-KW"/>
</dbReference>
<dbReference type="GO" id="GO:0006811">
    <property type="term" value="P:monoatomic ion transport"/>
    <property type="evidence" value="ECO:0007669"/>
    <property type="project" value="UniProtKB-KW"/>
</dbReference>
<dbReference type="GO" id="GO:0015774">
    <property type="term" value="P:polysaccharide transport"/>
    <property type="evidence" value="ECO:0007669"/>
    <property type="project" value="TreeGrafter"/>
</dbReference>
<dbReference type="CDD" id="cd01346">
    <property type="entry name" value="Maltoporin-like"/>
    <property type="match status" value="1"/>
</dbReference>
<dbReference type="FunFam" id="2.40.170.10:FF:000002">
    <property type="entry name" value="Cryptic outer membrane porin BglH"/>
    <property type="match status" value="1"/>
</dbReference>
<dbReference type="Gene3D" id="2.40.170.10">
    <property type="entry name" value="Porin, LamB type"/>
    <property type="match status" value="1"/>
</dbReference>
<dbReference type="InterPro" id="IPR050286">
    <property type="entry name" value="G_neg_Bact_CarbUptk_Porin"/>
</dbReference>
<dbReference type="InterPro" id="IPR021570">
    <property type="entry name" value="LamB-type_porin_N_dom"/>
</dbReference>
<dbReference type="InterPro" id="IPR003192">
    <property type="entry name" value="Porin_LamB"/>
</dbReference>
<dbReference type="InterPro" id="IPR036998">
    <property type="entry name" value="Porin_LamB_sf"/>
</dbReference>
<dbReference type="PANTHER" id="PTHR38762">
    <property type="entry name" value="CRYPTIC OUTER MEMBRANE PORIN BGLH-RELATED"/>
    <property type="match status" value="1"/>
</dbReference>
<dbReference type="PANTHER" id="PTHR38762:SF1">
    <property type="entry name" value="CRYPTIC OUTER MEMBRANE PORIN BGLH-RELATED"/>
    <property type="match status" value="1"/>
</dbReference>
<dbReference type="Pfam" id="PF02264">
    <property type="entry name" value="LamB"/>
    <property type="match status" value="1"/>
</dbReference>
<dbReference type="Pfam" id="PF11471">
    <property type="entry name" value="Sugarporin_N"/>
    <property type="match status" value="1"/>
</dbReference>
<dbReference type="SUPFAM" id="SSF56935">
    <property type="entry name" value="Porins"/>
    <property type="match status" value="1"/>
</dbReference>
<keyword id="KW-0998">Cell outer membrane</keyword>
<keyword id="KW-0406">Ion transport</keyword>
<keyword id="KW-0472">Membrane</keyword>
<keyword id="KW-0626">Porin</keyword>
<keyword id="KW-1185">Reference proteome</keyword>
<keyword id="KW-0732">Signal</keyword>
<keyword id="KW-0812">Transmembrane</keyword>
<keyword id="KW-1134">Transmembrane beta strand</keyword>
<keyword id="KW-0813">Transport</keyword>
<evidence type="ECO:0000255" key="1"/>
<evidence type="ECO:0000256" key="2">
    <source>
        <dbReference type="SAM" id="MobiDB-lite"/>
    </source>
</evidence>
<evidence type="ECO:0000305" key="3"/>
<sequence length="538" mass="60641">MFRRNLITSAILLMAPLAFSAQSLAESLTVEQRLELLEKALRETQSELKKYKDEEKKKYTPATVNRSVSTNDQGYAANPFPTSSAAKPDAVLVKNEEKNASETGSIYSSMTLKDFSKFVKDEIGFSYNGYYRSGWGTASHGSPKSWAIGSLGRFGNEYSGWFDLQLKQRVYNENGKRVDAVVMMDGNVGQQYSTGWFGDNAGGENFMQFSDMYVTTKGFLPFAPEADFWVGKHGAPKIEIQMLDWKTQRTDAAAGVGLENWKVGPGKIDIALVREDVDDYDRSLQNKQQINTNTIDLRYKDIPLWDKATLMVSGRYVTANESASEKDNQDNNGYYDWKDTWMFGTSLTQKFDKGGFNEFSFLVANNSIASNFGRYAGASPFTTFNGRYYGDHTGGTAVRLTSQGEAYIGDHFIVANAIVYSFGNDIYSYETGAHSDFESIRAVVRPAYIWDQYNQTGVELGYFTQQNKDANSNKFNESGYKTTLFHTFKVNTSMLTSRPEIRFYATYIKALENELDGFTFEDNKDDQFAVGAQAEIWW</sequence>
<gene>
    <name type="primary">bglH</name>
    <name type="ordered locus">SSON_3915</name>
</gene>